<organism>
    <name type="scientific">Wolbachia sp. subsp. Drosophila simulans (strain wRi)</name>
    <dbReference type="NCBI Taxonomy" id="66084"/>
    <lineage>
        <taxon>Bacteria</taxon>
        <taxon>Pseudomonadati</taxon>
        <taxon>Pseudomonadota</taxon>
        <taxon>Alphaproteobacteria</taxon>
        <taxon>Rickettsiales</taxon>
        <taxon>Anaplasmataceae</taxon>
        <taxon>Wolbachieae</taxon>
        <taxon>Wolbachia</taxon>
    </lineage>
</organism>
<feature type="chain" id="PRO_1000193338" description="Protein RecA">
    <location>
        <begin position="1"/>
        <end position="355"/>
    </location>
</feature>
<feature type="binding site" evidence="1">
    <location>
        <begin position="72"/>
        <end position="79"/>
    </location>
    <ligand>
        <name>ATP</name>
        <dbReference type="ChEBI" id="CHEBI:30616"/>
    </ligand>
</feature>
<gene>
    <name evidence="1" type="primary">recA</name>
    <name type="ordered locus">WRi_010830</name>
</gene>
<comment type="function">
    <text evidence="1">Can catalyze the hydrolysis of ATP in the presence of single-stranded DNA, the ATP-dependent uptake of single-stranded DNA by duplex DNA, and the ATP-dependent hybridization of homologous single-stranded DNAs. It interacts with LexA causing its activation and leading to its autocatalytic cleavage.</text>
</comment>
<comment type="subcellular location">
    <subcellularLocation>
        <location evidence="1">Cytoplasm</location>
    </subcellularLocation>
</comment>
<comment type="similarity">
    <text evidence="1">Belongs to the RecA family.</text>
</comment>
<keyword id="KW-0067">ATP-binding</keyword>
<keyword id="KW-0963">Cytoplasm</keyword>
<keyword id="KW-0227">DNA damage</keyword>
<keyword id="KW-0233">DNA recombination</keyword>
<keyword id="KW-0234">DNA repair</keyword>
<keyword id="KW-0238">DNA-binding</keyword>
<keyword id="KW-0547">Nucleotide-binding</keyword>
<keyword id="KW-0742">SOS response</keyword>
<reference key="1">
    <citation type="journal article" date="2009" name="Proc. Natl. Acad. Sci. U.S.A.">
        <title>The mosaic genome structure of the Wolbachia wRi strain infecting Drosophila simulans.</title>
        <authorList>
            <person name="Klasson L."/>
            <person name="Westberg J."/>
            <person name="Sapountzis P."/>
            <person name="Naeslund K."/>
            <person name="Lutnaes Y."/>
            <person name="Darby A.C."/>
            <person name="Veneti Z."/>
            <person name="Chen L."/>
            <person name="Braig H.R."/>
            <person name="Garrett R."/>
            <person name="Bourtzis K."/>
            <person name="Andersson S.G."/>
        </authorList>
    </citation>
    <scope>NUCLEOTIDE SEQUENCE [LARGE SCALE GENOMIC DNA]</scope>
    <source>
        <strain>wRi</strain>
    </source>
</reference>
<sequence length="355" mass="38656">MASNPEERNSDKQKALDNAISQIEKAFGKGAIMKLKQNPVEKIDTISTGSIALDSALGVGGLPKGRIIEIFGPESSGKTTLALHVIAEAQKKGGSCAFIDAEHALDVLYARKLGVSTDDLVISQPDTGEQALHIVEYLVCSGAVDVIVIDSVAALTPRAEIEGDMGDQHMGLQARLLSHGLRKLTSAVSKANCILIFINQIRMKIGVVYGNPETTTGGNALKFYTSVRLDIRKIGVIKDKENITGNETRVKVVKNKVAPPFREAKFDIMYNEGISKLGEIIDMGAKLGVLEKAGAYYSYNNTRLGQGRENVKTYLKTNKEVANEIETKIRDLLRNHDNSIIIDEDSEQLLEESVF</sequence>
<accession>C0R4E1</accession>
<proteinExistence type="inferred from homology"/>
<evidence type="ECO:0000255" key="1">
    <source>
        <dbReference type="HAMAP-Rule" id="MF_00268"/>
    </source>
</evidence>
<protein>
    <recommendedName>
        <fullName evidence="1">Protein RecA</fullName>
    </recommendedName>
    <alternativeName>
        <fullName evidence="1">Recombinase A</fullName>
    </alternativeName>
</protein>
<dbReference type="EMBL" id="CP001391">
    <property type="protein sequence ID" value="ACN95783.1"/>
    <property type="molecule type" value="Genomic_DNA"/>
</dbReference>
<dbReference type="RefSeq" id="WP_012673345.1">
    <property type="nucleotide sequence ID" value="NZ_MKIF01000082.1"/>
</dbReference>
<dbReference type="SMR" id="C0R4E1"/>
<dbReference type="STRING" id="66084.WRi_010830"/>
<dbReference type="KEGG" id="wri:WRi_010830"/>
<dbReference type="HOGENOM" id="CLU_040469_3_2_5"/>
<dbReference type="Proteomes" id="UP000001293">
    <property type="component" value="Chromosome"/>
</dbReference>
<dbReference type="GO" id="GO:0005829">
    <property type="term" value="C:cytosol"/>
    <property type="evidence" value="ECO:0007669"/>
    <property type="project" value="TreeGrafter"/>
</dbReference>
<dbReference type="GO" id="GO:0005524">
    <property type="term" value="F:ATP binding"/>
    <property type="evidence" value="ECO:0007669"/>
    <property type="project" value="UniProtKB-UniRule"/>
</dbReference>
<dbReference type="GO" id="GO:0016887">
    <property type="term" value="F:ATP hydrolysis activity"/>
    <property type="evidence" value="ECO:0007669"/>
    <property type="project" value="InterPro"/>
</dbReference>
<dbReference type="GO" id="GO:0140664">
    <property type="term" value="F:ATP-dependent DNA damage sensor activity"/>
    <property type="evidence" value="ECO:0007669"/>
    <property type="project" value="InterPro"/>
</dbReference>
<dbReference type="GO" id="GO:0003684">
    <property type="term" value="F:damaged DNA binding"/>
    <property type="evidence" value="ECO:0007669"/>
    <property type="project" value="UniProtKB-UniRule"/>
</dbReference>
<dbReference type="GO" id="GO:0003697">
    <property type="term" value="F:single-stranded DNA binding"/>
    <property type="evidence" value="ECO:0007669"/>
    <property type="project" value="UniProtKB-UniRule"/>
</dbReference>
<dbReference type="GO" id="GO:0006310">
    <property type="term" value="P:DNA recombination"/>
    <property type="evidence" value="ECO:0007669"/>
    <property type="project" value="UniProtKB-UniRule"/>
</dbReference>
<dbReference type="GO" id="GO:0006281">
    <property type="term" value="P:DNA repair"/>
    <property type="evidence" value="ECO:0007669"/>
    <property type="project" value="UniProtKB-UniRule"/>
</dbReference>
<dbReference type="GO" id="GO:0009432">
    <property type="term" value="P:SOS response"/>
    <property type="evidence" value="ECO:0007669"/>
    <property type="project" value="UniProtKB-UniRule"/>
</dbReference>
<dbReference type="CDD" id="cd00983">
    <property type="entry name" value="RecA"/>
    <property type="match status" value="1"/>
</dbReference>
<dbReference type="FunFam" id="3.40.50.300:FF:000087">
    <property type="entry name" value="Recombinase RecA"/>
    <property type="match status" value="1"/>
</dbReference>
<dbReference type="Gene3D" id="3.40.50.300">
    <property type="entry name" value="P-loop containing nucleotide triphosphate hydrolases"/>
    <property type="match status" value="1"/>
</dbReference>
<dbReference type="HAMAP" id="MF_00268">
    <property type="entry name" value="RecA"/>
    <property type="match status" value="1"/>
</dbReference>
<dbReference type="InterPro" id="IPR003593">
    <property type="entry name" value="AAA+_ATPase"/>
</dbReference>
<dbReference type="InterPro" id="IPR013765">
    <property type="entry name" value="DNA_recomb/repair_RecA"/>
</dbReference>
<dbReference type="InterPro" id="IPR020584">
    <property type="entry name" value="DNA_recomb/repair_RecA_CS"/>
</dbReference>
<dbReference type="InterPro" id="IPR027417">
    <property type="entry name" value="P-loop_NTPase"/>
</dbReference>
<dbReference type="InterPro" id="IPR049261">
    <property type="entry name" value="RecA-like_C"/>
</dbReference>
<dbReference type="InterPro" id="IPR049428">
    <property type="entry name" value="RecA-like_N"/>
</dbReference>
<dbReference type="InterPro" id="IPR020588">
    <property type="entry name" value="RecA_ATP-bd"/>
</dbReference>
<dbReference type="InterPro" id="IPR023400">
    <property type="entry name" value="RecA_C_sf"/>
</dbReference>
<dbReference type="InterPro" id="IPR020587">
    <property type="entry name" value="RecA_monomer-monomer_interface"/>
</dbReference>
<dbReference type="NCBIfam" id="TIGR02012">
    <property type="entry name" value="tigrfam_recA"/>
    <property type="match status" value="1"/>
</dbReference>
<dbReference type="PANTHER" id="PTHR45900:SF1">
    <property type="entry name" value="MITOCHONDRIAL DNA REPAIR PROTEIN RECA HOMOLOG-RELATED"/>
    <property type="match status" value="1"/>
</dbReference>
<dbReference type="PANTHER" id="PTHR45900">
    <property type="entry name" value="RECA"/>
    <property type="match status" value="1"/>
</dbReference>
<dbReference type="Pfam" id="PF00154">
    <property type="entry name" value="RecA"/>
    <property type="match status" value="1"/>
</dbReference>
<dbReference type="Pfam" id="PF21096">
    <property type="entry name" value="RecA_C"/>
    <property type="match status" value="1"/>
</dbReference>
<dbReference type="PRINTS" id="PR00142">
    <property type="entry name" value="RECA"/>
</dbReference>
<dbReference type="SMART" id="SM00382">
    <property type="entry name" value="AAA"/>
    <property type="match status" value="1"/>
</dbReference>
<dbReference type="SUPFAM" id="SSF52540">
    <property type="entry name" value="P-loop containing nucleoside triphosphate hydrolases"/>
    <property type="match status" value="1"/>
</dbReference>
<dbReference type="SUPFAM" id="SSF54752">
    <property type="entry name" value="RecA protein, C-terminal domain"/>
    <property type="match status" value="1"/>
</dbReference>
<dbReference type="PROSITE" id="PS00321">
    <property type="entry name" value="RECA_1"/>
    <property type="match status" value="1"/>
</dbReference>
<dbReference type="PROSITE" id="PS50162">
    <property type="entry name" value="RECA_2"/>
    <property type="match status" value="1"/>
</dbReference>
<dbReference type="PROSITE" id="PS50163">
    <property type="entry name" value="RECA_3"/>
    <property type="match status" value="1"/>
</dbReference>
<name>RECA_WOLWR</name>